<organism>
    <name type="scientific">Encephalitozoon cuniculi (strain GB-M1)</name>
    <name type="common">Microsporidian parasite</name>
    <dbReference type="NCBI Taxonomy" id="284813"/>
    <lineage>
        <taxon>Eukaryota</taxon>
        <taxon>Fungi</taxon>
        <taxon>Fungi incertae sedis</taxon>
        <taxon>Microsporidia</taxon>
        <taxon>Unikaryonidae</taxon>
        <taxon>Encephalitozoon</taxon>
    </lineage>
</organism>
<gene>
    <name type="ordered locus">ECU03_1200</name>
</gene>
<protein>
    <recommendedName>
        <fullName>Uncharacterized protein ECU03_1200</fullName>
    </recommendedName>
</protein>
<sequence length="139" mass="16699">MFEAINSVDNRVIRRSEEQEKSTLMAEYNKALRTLDVGPFLKYRVKHDVNLGLHRKATGYLISNYTIKKTLEEVESNVERYRLLDHRESLFNMARRNITEARNFVRARKLLNIARERGFFYNELYELEELLDHEWCPET</sequence>
<accession>Q8SW17</accession>
<keyword id="KW-1185">Reference proteome</keyword>
<proteinExistence type="predicted"/>
<name>Y3C0_ENCCU</name>
<dbReference type="EMBL" id="AL590443">
    <property type="protein sequence ID" value="CAD26264.1"/>
    <property type="molecule type" value="Genomic_DNA"/>
</dbReference>
<dbReference type="RefSeq" id="NP_597629.1">
    <property type="nucleotide sequence ID" value="NM_001040993.1"/>
</dbReference>
<dbReference type="GeneID" id="858791"/>
<dbReference type="KEGG" id="ecu:ECU03_1200"/>
<dbReference type="VEuPathDB" id="MicrosporidiaDB:ECU03_1200"/>
<dbReference type="HOGENOM" id="CLU_1845083_0_0_1"/>
<dbReference type="InParanoid" id="Q8SW17"/>
<dbReference type="OrthoDB" id="2191619at2759"/>
<dbReference type="Proteomes" id="UP000000819">
    <property type="component" value="Chromosome III"/>
</dbReference>
<reference key="1">
    <citation type="journal article" date="2001" name="Nature">
        <title>Genome sequence and gene compaction of the eukaryote parasite Encephalitozoon cuniculi.</title>
        <authorList>
            <person name="Katinka M.D."/>
            <person name="Duprat S."/>
            <person name="Cornillot E."/>
            <person name="Metenier G."/>
            <person name="Thomarat F."/>
            <person name="Prensier G."/>
            <person name="Barbe V."/>
            <person name="Peyretaillade E."/>
            <person name="Brottier P."/>
            <person name="Wincker P."/>
            <person name="Delbac F."/>
            <person name="El Alaoui H."/>
            <person name="Peyret P."/>
            <person name="Saurin W."/>
            <person name="Gouy M."/>
            <person name="Weissenbach J."/>
            <person name="Vivares C.P."/>
        </authorList>
    </citation>
    <scope>NUCLEOTIDE SEQUENCE [LARGE SCALE GENOMIC DNA]</scope>
    <source>
        <strain>GB-M1</strain>
    </source>
</reference>
<feature type="chain" id="PRO_0000223087" description="Uncharacterized protein ECU03_1200">
    <location>
        <begin position="1"/>
        <end position="139"/>
    </location>
</feature>